<name>GDH_AGRFC</name>
<dbReference type="EC" id="1.1.1.16" evidence="4"/>
<dbReference type="EC" id="1.1.1.-" evidence="4"/>
<dbReference type="EMBL" id="AE007870">
    <property type="protein sequence ID" value="AAK90222.2"/>
    <property type="molecule type" value="Genomic_DNA"/>
</dbReference>
<dbReference type="RefSeq" id="NP_357437.2">
    <property type="nucleotide sequence ID" value="NC_003063.2"/>
</dbReference>
<dbReference type="RefSeq" id="WP_010972809.1">
    <property type="nucleotide sequence ID" value="NC_003063.2"/>
</dbReference>
<dbReference type="SMR" id="A9CES4"/>
<dbReference type="STRING" id="176299.Atu3164"/>
<dbReference type="EnsemblBacteria" id="AAK90222">
    <property type="protein sequence ID" value="AAK90222"/>
    <property type="gene ID" value="Atu3164"/>
</dbReference>
<dbReference type="GeneID" id="1134966"/>
<dbReference type="KEGG" id="atu:Atu3164"/>
<dbReference type="PATRIC" id="fig|176299.10.peg.3009"/>
<dbReference type="eggNOG" id="COG1028">
    <property type="taxonomic scope" value="Bacteria"/>
</dbReference>
<dbReference type="HOGENOM" id="CLU_010194_1_0_5"/>
<dbReference type="OrthoDB" id="9780084at2"/>
<dbReference type="PhylomeDB" id="A9CES4"/>
<dbReference type="BioCyc" id="MetaCyc:MONOMER-20146"/>
<dbReference type="Proteomes" id="UP000000813">
    <property type="component" value="Chromosome linear"/>
</dbReference>
<dbReference type="GO" id="GO:0047713">
    <property type="term" value="F:galactitol 2-dehydrogenase activity"/>
    <property type="evidence" value="ECO:0000314"/>
    <property type="project" value="UniProtKB"/>
</dbReference>
<dbReference type="GO" id="GO:0003939">
    <property type="term" value="F:L-iditol 2-dehydrogenase (NAD+) activity"/>
    <property type="evidence" value="ECO:0007669"/>
    <property type="project" value="RHEA"/>
</dbReference>
<dbReference type="GO" id="GO:0019402">
    <property type="term" value="P:galactitol metabolic process"/>
    <property type="evidence" value="ECO:0000314"/>
    <property type="project" value="UniProtKB"/>
</dbReference>
<dbReference type="FunFam" id="3.40.50.720:FF:000536">
    <property type="entry name" value="Sorbitol dehydrogenase"/>
    <property type="match status" value="1"/>
</dbReference>
<dbReference type="Gene3D" id="3.40.50.720">
    <property type="entry name" value="NAD(P)-binding Rossmann-like Domain"/>
    <property type="match status" value="1"/>
</dbReference>
<dbReference type="InterPro" id="IPR036291">
    <property type="entry name" value="NAD(P)-bd_dom_sf"/>
</dbReference>
<dbReference type="InterPro" id="IPR002347">
    <property type="entry name" value="SDR_fam"/>
</dbReference>
<dbReference type="NCBIfam" id="NF005472">
    <property type="entry name" value="PRK07067.1"/>
    <property type="match status" value="1"/>
</dbReference>
<dbReference type="NCBIfam" id="NF005559">
    <property type="entry name" value="PRK07231.1"/>
    <property type="match status" value="1"/>
</dbReference>
<dbReference type="PANTHER" id="PTHR42760">
    <property type="entry name" value="SHORT-CHAIN DEHYDROGENASES/REDUCTASES FAMILY MEMBER"/>
    <property type="match status" value="1"/>
</dbReference>
<dbReference type="Pfam" id="PF13561">
    <property type="entry name" value="adh_short_C2"/>
    <property type="match status" value="1"/>
</dbReference>
<dbReference type="PRINTS" id="PR00081">
    <property type="entry name" value="GDHRDH"/>
</dbReference>
<dbReference type="PRINTS" id="PR00080">
    <property type="entry name" value="SDRFAMILY"/>
</dbReference>
<dbReference type="SUPFAM" id="SSF51735">
    <property type="entry name" value="NAD(P)-binding Rossmann-fold domains"/>
    <property type="match status" value="1"/>
</dbReference>
<reference key="1">
    <citation type="journal article" date="2001" name="Science">
        <title>The genome of the natural genetic engineer Agrobacterium tumefaciens C58.</title>
        <authorList>
            <person name="Wood D.W."/>
            <person name="Setubal J.C."/>
            <person name="Kaul R."/>
            <person name="Monks D.E."/>
            <person name="Kitajima J.P."/>
            <person name="Okura V.K."/>
            <person name="Zhou Y."/>
            <person name="Chen L."/>
            <person name="Wood G.E."/>
            <person name="Almeida N.F. Jr."/>
            <person name="Woo L."/>
            <person name="Chen Y."/>
            <person name="Paulsen I.T."/>
            <person name="Eisen J.A."/>
            <person name="Karp P.D."/>
            <person name="Bovee D. Sr."/>
            <person name="Chapman P."/>
            <person name="Clendenning J."/>
            <person name="Deatherage G."/>
            <person name="Gillet W."/>
            <person name="Grant C."/>
            <person name="Kutyavin T."/>
            <person name="Levy R."/>
            <person name="Li M.-J."/>
            <person name="McClelland E."/>
            <person name="Palmieri A."/>
            <person name="Raymond C."/>
            <person name="Rouse G."/>
            <person name="Saenphimmachak C."/>
            <person name="Wu Z."/>
            <person name="Romero P."/>
            <person name="Gordon D."/>
            <person name="Zhang S."/>
            <person name="Yoo H."/>
            <person name="Tao Y."/>
            <person name="Biddle P."/>
            <person name="Jung M."/>
            <person name="Krespan W."/>
            <person name="Perry M."/>
            <person name="Gordon-Kamm B."/>
            <person name="Liao L."/>
            <person name="Kim S."/>
            <person name="Hendrick C."/>
            <person name="Zhao Z.-Y."/>
            <person name="Dolan M."/>
            <person name="Chumley F."/>
            <person name="Tingey S.V."/>
            <person name="Tomb J.-F."/>
            <person name="Gordon M.P."/>
            <person name="Olson M.V."/>
            <person name="Nester E.W."/>
        </authorList>
    </citation>
    <scope>NUCLEOTIDE SEQUENCE [LARGE SCALE GENOMIC DNA]</scope>
    <source>
        <strain>C58 / ATCC 33970</strain>
    </source>
</reference>
<reference key="2">
    <citation type="journal article" date="2001" name="Science">
        <title>Genome sequence of the plant pathogen and biotechnology agent Agrobacterium tumefaciens C58.</title>
        <authorList>
            <person name="Goodner B."/>
            <person name="Hinkle G."/>
            <person name="Gattung S."/>
            <person name="Miller N."/>
            <person name="Blanchard M."/>
            <person name="Qurollo B."/>
            <person name="Goldman B.S."/>
            <person name="Cao Y."/>
            <person name="Askenazi M."/>
            <person name="Halling C."/>
            <person name="Mullin L."/>
            <person name="Houmiel K."/>
            <person name="Gordon J."/>
            <person name="Vaudin M."/>
            <person name="Iartchouk O."/>
            <person name="Epp A."/>
            <person name="Liu F."/>
            <person name="Wollam C."/>
            <person name="Allinger M."/>
            <person name="Doughty D."/>
            <person name="Scott C."/>
            <person name="Lappas C."/>
            <person name="Markelz B."/>
            <person name="Flanagan C."/>
            <person name="Crowell C."/>
            <person name="Gurson J."/>
            <person name="Lomo C."/>
            <person name="Sear C."/>
            <person name="Strub G."/>
            <person name="Cielo C."/>
            <person name="Slater S."/>
        </authorList>
    </citation>
    <scope>NUCLEOTIDE SEQUENCE [LARGE SCALE GENOMIC DNA]</scope>
    <source>
        <strain>C58 / ATCC 33970</strain>
    </source>
</reference>
<reference key="3">
    <citation type="journal article" date="2015" name="J. Biol. Chem.">
        <title>ATP-binding cassette (ABC) transport system solute-binding protein-guided identification of novel D-altritol and galactitol catabolic pathways in Agrobacterium tumefaciens C58.</title>
        <authorList>
            <person name="Wichelecki D.J."/>
            <person name="Vetting M.W."/>
            <person name="Chou L."/>
            <person name="Al-Obaidi N."/>
            <person name="Bouvier J.T."/>
            <person name="Almo S.C."/>
            <person name="Gerlt J.A."/>
        </authorList>
    </citation>
    <scope>FUNCTION</scope>
    <scope>CATALYTIC ACTIVITY</scope>
    <scope>BIOPHYSICOCHEMICAL PROPERTIES</scope>
    <scope>PATHWAY</scope>
    <scope>INDUCTION</scope>
    <scope>DISRUPTION PHENOTYPE</scope>
    <source>
        <strain>C58 / ATCC 33970</strain>
    </source>
</reference>
<organism>
    <name type="scientific">Agrobacterium fabrum (strain C58 / ATCC 33970)</name>
    <name type="common">Agrobacterium tumefaciens (strain C58)</name>
    <dbReference type="NCBI Taxonomy" id="176299"/>
    <lineage>
        <taxon>Bacteria</taxon>
        <taxon>Pseudomonadati</taxon>
        <taxon>Pseudomonadota</taxon>
        <taxon>Alphaproteobacteria</taxon>
        <taxon>Hyphomicrobiales</taxon>
        <taxon>Rhizobiaceae</taxon>
        <taxon>Rhizobium/Agrobacterium group</taxon>
        <taxon>Agrobacterium</taxon>
        <taxon>Agrobacterium tumefaciens complex</taxon>
    </lineage>
</organism>
<gene>
    <name evidence="7" type="ordered locus">Atu3164</name>
</gene>
<protein>
    <recommendedName>
        <fullName evidence="6">Galactitol 2-dehydrogenase</fullName>
        <shortName evidence="6">GDH</shortName>
        <ecNumber evidence="4">1.1.1.16</ecNumber>
    </recommendedName>
    <alternativeName>
        <fullName evidence="5">Sorbitol dehydrogenase</fullName>
        <shortName evidence="5">SorbD</shortName>
        <ecNumber evidence="4">1.1.1.-</ecNumber>
    </alternativeName>
</protein>
<comment type="function">
    <text evidence="4">Involved in galactitol catabolism. Catalyzes the oxidation of galactitol to D-tagatose. Can also catalyze the oxidation of D-sorbitol to D-fructose.</text>
</comment>
<comment type="catalytic activity">
    <reaction evidence="4">
        <text>galactitol + NAD(+) = keto-D-tagatose + NADH + H(+)</text>
        <dbReference type="Rhea" id="RHEA:20685"/>
        <dbReference type="ChEBI" id="CHEBI:15378"/>
        <dbReference type="ChEBI" id="CHEBI:16813"/>
        <dbReference type="ChEBI" id="CHEBI:47693"/>
        <dbReference type="ChEBI" id="CHEBI:57540"/>
        <dbReference type="ChEBI" id="CHEBI:57945"/>
        <dbReference type="EC" id="1.1.1.16"/>
    </reaction>
</comment>
<comment type="catalytic activity">
    <reaction evidence="4">
        <text>keto-D-fructose + NADH + H(+) = D-sorbitol + NAD(+)</text>
        <dbReference type="Rhea" id="RHEA:33031"/>
        <dbReference type="ChEBI" id="CHEBI:15378"/>
        <dbReference type="ChEBI" id="CHEBI:17924"/>
        <dbReference type="ChEBI" id="CHEBI:48095"/>
        <dbReference type="ChEBI" id="CHEBI:57540"/>
        <dbReference type="ChEBI" id="CHEBI:57945"/>
    </reaction>
</comment>
<comment type="biophysicochemical properties">
    <kinetics>
        <KM evidence="4">2 mM for galactitol</KM>
        <KM evidence="4">1.9 mM for D-sorbitol</KM>
        <text evidence="4">kcat is 3.5 sec(-1) with galactitol as substrate. kcat is 4.4 sec(-1) with D-sorbitol as substrate.</text>
    </kinetics>
</comment>
<comment type="pathway">
    <text evidence="4">Carbohydrate metabolism.</text>
</comment>
<comment type="induction">
    <text evidence="4">Up-regulated by growth on D-altritol or galactitol.</text>
</comment>
<comment type="disruption phenotype">
    <text evidence="4">Deletion mutant cannot grow on D-galactitol. Does not exhibit a growth defect when grown on D-altritol.</text>
</comment>
<comment type="similarity">
    <text evidence="6">Belongs to the short-chain dehydrogenases/reductases (SDR) family.</text>
</comment>
<proteinExistence type="evidence at protein level"/>
<keyword id="KW-0119">Carbohydrate metabolism</keyword>
<keyword id="KW-0520">NAD</keyword>
<keyword id="KW-0560">Oxidoreductase</keyword>
<keyword id="KW-1185">Reference proteome</keyword>
<sequence length="256" mass="26712">MRLNNKVALITGAARGIGLGFAQAFAAEGAKVIIADIDIARATTSAAAIGPAAKAVKLDVTDLAQIDAVVKAVDEEFGGIDILVNNAAIFDMAPINGITEESYERVFDINLKGPMFMMKAVSNVMIARARGGKIINMASQAGRRGEALVTLYCASKAAIISATQSAALALVKHGINVNAIAPGVVDGEHWEVVDAHFAKWEGLKPGEKKAAVAKSVPIGRFATPDDIKGLAVFLASADSDYILAQTYNVDGGNWMS</sequence>
<evidence type="ECO:0000250" key="1">
    <source>
        <dbReference type="UniProtKB" id="Q48436"/>
    </source>
</evidence>
<evidence type="ECO:0000250" key="2">
    <source>
        <dbReference type="UniProtKB" id="Q9ZNN8"/>
    </source>
</evidence>
<evidence type="ECO:0000255" key="3"/>
<evidence type="ECO:0000269" key="4">
    <source>
    </source>
</evidence>
<evidence type="ECO:0000303" key="5">
    <source>
    </source>
</evidence>
<evidence type="ECO:0000305" key="6"/>
<evidence type="ECO:0000312" key="7">
    <source>
        <dbReference type="EMBL" id="AAK90222.2"/>
    </source>
</evidence>
<feature type="chain" id="PRO_5002736555" description="Galactitol 2-dehydrogenase" evidence="3">
    <location>
        <begin position="1"/>
        <end position="256"/>
    </location>
</feature>
<feature type="active site" description="Proton acceptor" evidence="1">
    <location>
        <position position="152"/>
    </location>
</feature>
<feature type="binding site" evidence="2">
    <location>
        <begin position="15"/>
        <end position="17"/>
    </location>
    <ligand>
        <name>NAD(+)</name>
        <dbReference type="ChEBI" id="CHEBI:57540"/>
    </ligand>
</feature>
<feature type="binding site" evidence="2">
    <location>
        <position position="36"/>
    </location>
    <ligand>
        <name>NAD(+)</name>
        <dbReference type="ChEBI" id="CHEBI:57540"/>
    </ligand>
</feature>
<feature type="binding site" evidence="2">
    <location>
        <begin position="59"/>
        <end position="60"/>
    </location>
    <ligand>
        <name>NAD(+)</name>
        <dbReference type="ChEBI" id="CHEBI:57540"/>
    </ligand>
</feature>
<feature type="binding site" evidence="2">
    <location>
        <position position="86"/>
    </location>
    <ligand>
        <name>NAD(+)</name>
        <dbReference type="ChEBI" id="CHEBI:57540"/>
    </ligand>
</feature>
<feature type="binding site" evidence="2">
    <location>
        <position position="152"/>
    </location>
    <ligand>
        <name>NAD(+)</name>
        <dbReference type="ChEBI" id="CHEBI:57540"/>
    </ligand>
</feature>
<feature type="binding site" evidence="2">
    <location>
        <position position="156"/>
    </location>
    <ligand>
        <name>NAD(+)</name>
        <dbReference type="ChEBI" id="CHEBI:57540"/>
    </ligand>
</feature>
<accession>A9CES4</accession>